<reference key="1">
    <citation type="journal article" date="2002" name="Lancet">
        <title>Genome and virulence determinants of high virulence community-acquired MRSA.</title>
        <authorList>
            <person name="Baba T."/>
            <person name="Takeuchi F."/>
            <person name="Kuroda M."/>
            <person name="Yuzawa H."/>
            <person name="Aoki K."/>
            <person name="Oguchi A."/>
            <person name="Nagai Y."/>
            <person name="Iwama N."/>
            <person name="Asano K."/>
            <person name="Naimi T."/>
            <person name="Kuroda H."/>
            <person name="Cui L."/>
            <person name="Yamamoto K."/>
            <person name="Hiramatsu K."/>
        </authorList>
    </citation>
    <scope>NUCLEOTIDE SEQUENCE [LARGE SCALE GENOMIC DNA]</scope>
    <source>
        <strain>MW2</strain>
    </source>
</reference>
<keyword id="KW-0012">Acyltransferase</keyword>
<keyword id="KW-0808">Transferase</keyword>
<gene>
    <name type="primary">vraB</name>
    <name type="ordered locus">MW0531</name>
</gene>
<feature type="chain" id="PRO_0000206431" description="Putative acetyl-CoA C-acetyltransferase VraB">
    <location>
        <begin position="1"/>
        <end position="379"/>
    </location>
</feature>
<feature type="active site" description="Acyl-thioester intermediate" evidence="1">
    <location>
        <position position="86"/>
    </location>
</feature>
<feature type="active site" description="Proton acceptor" evidence="1">
    <location>
        <position position="338"/>
    </location>
</feature>
<proteinExistence type="inferred from homology"/>
<comment type="similarity">
    <text evidence="2">Belongs to the thiolase-like superfamily. Thiolase family.</text>
</comment>
<protein>
    <recommendedName>
        <fullName>Putative acetyl-CoA C-acetyltransferase VraB</fullName>
        <ecNumber>2.3.1.-</ecNumber>
    </recommendedName>
</protein>
<sequence>MNQAVIVAAKRTAFGKYGGTLKHLEPEQLLKPLFQHFKEKYPEVISKIDDVVLGNVVGNGGNIARKALLEAGLKDSIPGVTIDRQCGSGLESVQYACRMIQAGAGKVYIAGGVESTSRAPWKIKRPHSVYETALPEFYERASFAPEMSDPSMIQGAENVAKMYDVSRELQDEFAYRSHQLTAENVKNGNISQEILPITVKGEIFNTDESLKSHIPKDNFGRFKPVIKGGTVTAANSCMKNDGAVLLLIMEKDMAYELGFEHGLLFKDGVTVGVDSNFPGIGPVPAISNLLKRNQLTIENIEVIEINEAFSAQVVACQQALNISNTQLNIWGGALASGHPYGASGAQLVTRLFYMFDKETMIASMGIGGGLGNAALFTRF</sequence>
<name>VRAB_STAAW</name>
<organism>
    <name type="scientific">Staphylococcus aureus (strain MW2)</name>
    <dbReference type="NCBI Taxonomy" id="196620"/>
    <lineage>
        <taxon>Bacteria</taxon>
        <taxon>Bacillati</taxon>
        <taxon>Bacillota</taxon>
        <taxon>Bacilli</taxon>
        <taxon>Bacillales</taxon>
        <taxon>Staphylococcaceae</taxon>
        <taxon>Staphylococcus</taxon>
    </lineage>
</organism>
<evidence type="ECO:0000250" key="1"/>
<evidence type="ECO:0000305" key="2"/>
<accession>Q7A1P9</accession>
<dbReference type="EC" id="2.3.1.-"/>
<dbReference type="EMBL" id="BA000033">
    <property type="protein sequence ID" value="BAB94396.1"/>
    <property type="molecule type" value="Genomic_DNA"/>
</dbReference>
<dbReference type="RefSeq" id="WP_001070676.1">
    <property type="nucleotide sequence ID" value="NC_003923.1"/>
</dbReference>
<dbReference type="SMR" id="Q7A1P9"/>
<dbReference type="KEGG" id="sam:MW0531"/>
<dbReference type="HOGENOM" id="CLU_031026_2_1_9"/>
<dbReference type="GO" id="GO:0005737">
    <property type="term" value="C:cytoplasm"/>
    <property type="evidence" value="ECO:0007669"/>
    <property type="project" value="UniProtKB-ARBA"/>
</dbReference>
<dbReference type="GO" id="GO:0003988">
    <property type="term" value="F:acetyl-CoA C-acyltransferase activity"/>
    <property type="evidence" value="ECO:0007669"/>
    <property type="project" value="TreeGrafter"/>
</dbReference>
<dbReference type="GO" id="GO:0006635">
    <property type="term" value="P:fatty acid beta-oxidation"/>
    <property type="evidence" value="ECO:0007669"/>
    <property type="project" value="TreeGrafter"/>
</dbReference>
<dbReference type="GO" id="GO:0010124">
    <property type="term" value="P:phenylacetate catabolic process"/>
    <property type="evidence" value="ECO:0007669"/>
    <property type="project" value="TreeGrafter"/>
</dbReference>
<dbReference type="CDD" id="cd00751">
    <property type="entry name" value="thiolase"/>
    <property type="match status" value="1"/>
</dbReference>
<dbReference type="Gene3D" id="3.40.47.10">
    <property type="match status" value="2"/>
</dbReference>
<dbReference type="InterPro" id="IPR002155">
    <property type="entry name" value="Thiolase"/>
</dbReference>
<dbReference type="InterPro" id="IPR016039">
    <property type="entry name" value="Thiolase-like"/>
</dbReference>
<dbReference type="InterPro" id="IPR050215">
    <property type="entry name" value="Thiolase-like_sf_Thiolase"/>
</dbReference>
<dbReference type="InterPro" id="IPR020617">
    <property type="entry name" value="Thiolase_C"/>
</dbReference>
<dbReference type="InterPro" id="IPR020613">
    <property type="entry name" value="Thiolase_CS"/>
</dbReference>
<dbReference type="InterPro" id="IPR020616">
    <property type="entry name" value="Thiolase_N"/>
</dbReference>
<dbReference type="NCBIfam" id="TIGR01930">
    <property type="entry name" value="AcCoA-C-Actrans"/>
    <property type="match status" value="1"/>
</dbReference>
<dbReference type="PANTHER" id="PTHR43853">
    <property type="entry name" value="3-KETOACYL-COA THIOLASE, PEROXISOMAL"/>
    <property type="match status" value="1"/>
</dbReference>
<dbReference type="PANTHER" id="PTHR43853:SF3">
    <property type="entry name" value="ACETYL-COA C-ACETYLTRANSFERASE YHFS-RELATED"/>
    <property type="match status" value="1"/>
</dbReference>
<dbReference type="Pfam" id="PF02803">
    <property type="entry name" value="Thiolase_C"/>
    <property type="match status" value="1"/>
</dbReference>
<dbReference type="Pfam" id="PF00108">
    <property type="entry name" value="Thiolase_N"/>
    <property type="match status" value="1"/>
</dbReference>
<dbReference type="PIRSF" id="PIRSF000429">
    <property type="entry name" value="Ac-CoA_Ac_transf"/>
    <property type="match status" value="1"/>
</dbReference>
<dbReference type="SUPFAM" id="SSF53901">
    <property type="entry name" value="Thiolase-like"/>
    <property type="match status" value="2"/>
</dbReference>
<dbReference type="PROSITE" id="PS00737">
    <property type="entry name" value="THIOLASE_2"/>
    <property type="match status" value="1"/>
</dbReference>